<feature type="chain" id="PRO_1000145546" description="Glutathione-regulated potassium-efflux system protein KefC">
    <location>
        <begin position="1"/>
        <end position="620"/>
    </location>
</feature>
<feature type="transmembrane region" description="Helical" evidence="1">
    <location>
        <begin position="4"/>
        <end position="24"/>
    </location>
</feature>
<feature type="transmembrane region" description="Helical" evidence="1">
    <location>
        <begin position="26"/>
        <end position="46"/>
    </location>
</feature>
<feature type="transmembrane region" description="Helical" evidence="1">
    <location>
        <begin position="54"/>
        <end position="74"/>
    </location>
</feature>
<feature type="transmembrane region" description="Helical" evidence="1">
    <location>
        <begin position="90"/>
        <end position="110"/>
    </location>
</feature>
<feature type="transmembrane region" description="Helical" evidence="1">
    <location>
        <begin position="114"/>
        <end position="134"/>
    </location>
</feature>
<feature type="transmembrane region" description="Helical" evidence="1">
    <location>
        <begin position="149"/>
        <end position="169"/>
    </location>
</feature>
<feature type="transmembrane region" description="Helical" evidence="1">
    <location>
        <begin position="178"/>
        <end position="198"/>
    </location>
</feature>
<feature type="transmembrane region" description="Helical" evidence="1">
    <location>
        <begin position="218"/>
        <end position="238"/>
    </location>
</feature>
<feature type="transmembrane region" description="Helical" evidence="1">
    <location>
        <begin position="270"/>
        <end position="290"/>
    </location>
</feature>
<feature type="transmembrane region" description="Helical" evidence="1">
    <location>
        <begin position="294"/>
        <end position="314"/>
    </location>
</feature>
<feature type="transmembrane region" description="Helical" evidence="1">
    <location>
        <begin position="327"/>
        <end position="347"/>
    </location>
</feature>
<feature type="transmembrane region" description="Helical" evidence="1">
    <location>
        <begin position="359"/>
        <end position="379"/>
    </location>
</feature>
<feature type="domain" description="RCK N-terminal" evidence="2">
    <location>
        <begin position="399"/>
        <end position="518"/>
    </location>
</feature>
<feature type="region of interest" description="Disordered" evidence="3">
    <location>
        <begin position="599"/>
        <end position="620"/>
    </location>
</feature>
<comment type="function">
    <text evidence="1">Pore-forming subunit of a potassium efflux system that confers protection against electrophiles. Catalyzes K(+)/H(+) antiport.</text>
</comment>
<comment type="subunit">
    <text evidence="1">Homodimer. Interacts with the regulatory subunit KefF.</text>
</comment>
<comment type="subcellular location">
    <subcellularLocation>
        <location evidence="1">Cell inner membrane</location>
        <topology evidence="1">Multi-pass membrane protein</topology>
    </subcellularLocation>
</comment>
<comment type="similarity">
    <text evidence="1">Belongs to the monovalent cation:proton antiporter 2 (CPA2) transporter (TC 2.A.37) family. KefC subfamily.</text>
</comment>
<name>KEFC_SALDC</name>
<protein>
    <recommendedName>
        <fullName evidence="1">Glutathione-regulated potassium-efflux system protein KefC</fullName>
    </recommendedName>
    <alternativeName>
        <fullName evidence="1">K(+)/H(+) antiporter</fullName>
    </alternativeName>
</protein>
<reference key="1">
    <citation type="journal article" date="2011" name="J. Bacteriol.">
        <title>Comparative genomics of 28 Salmonella enterica isolates: evidence for CRISPR-mediated adaptive sublineage evolution.</title>
        <authorList>
            <person name="Fricke W.F."/>
            <person name="Mammel M.K."/>
            <person name="McDermott P.F."/>
            <person name="Tartera C."/>
            <person name="White D.G."/>
            <person name="Leclerc J.E."/>
            <person name="Ravel J."/>
            <person name="Cebula T.A."/>
        </authorList>
    </citation>
    <scope>NUCLEOTIDE SEQUENCE [LARGE SCALE GENOMIC DNA]</scope>
    <source>
        <strain>CT_02021853</strain>
    </source>
</reference>
<gene>
    <name evidence="1" type="primary">kefC</name>
    <name type="ordered locus">SeD_A0089</name>
</gene>
<keyword id="KW-0050">Antiport</keyword>
<keyword id="KW-0997">Cell inner membrane</keyword>
<keyword id="KW-1003">Cell membrane</keyword>
<keyword id="KW-0406">Ion transport</keyword>
<keyword id="KW-0472">Membrane</keyword>
<keyword id="KW-0630">Potassium</keyword>
<keyword id="KW-0633">Potassium transport</keyword>
<keyword id="KW-0812">Transmembrane</keyword>
<keyword id="KW-1133">Transmembrane helix</keyword>
<keyword id="KW-0813">Transport</keyword>
<proteinExistence type="inferred from homology"/>
<dbReference type="EMBL" id="CP001144">
    <property type="protein sequence ID" value="ACH77914.1"/>
    <property type="molecule type" value="Genomic_DNA"/>
</dbReference>
<dbReference type="RefSeq" id="WP_000377163.1">
    <property type="nucleotide sequence ID" value="NC_011205.1"/>
</dbReference>
<dbReference type="SMR" id="B5FI29"/>
<dbReference type="KEGG" id="sed:SeD_A0089"/>
<dbReference type="HOGENOM" id="CLU_005126_9_3_6"/>
<dbReference type="Proteomes" id="UP000008322">
    <property type="component" value="Chromosome"/>
</dbReference>
<dbReference type="GO" id="GO:0005886">
    <property type="term" value="C:plasma membrane"/>
    <property type="evidence" value="ECO:0007669"/>
    <property type="project" value="UniProtKB-SubCell"/>
</dbReference>
<dbReference type="GO" id="GO:0019899">
    <property type="term" value="F:enzyme binding"/>
    <property type="evidence" value="ECO:0007669"/>
    <property type="project" value="InterPro"/>
</dbReference>
<dbReference type="GO" id="GO:0015503">
    <property type="term" value="F:glutathione-regulated potassium exporter activity"/>
    <property type="evidence" value="ECO:0007669"/>
    <property type="project" value="UniProtKB-UniRule"/>
</dbReference>
<dbReference type="GO" id="GO:0015643">
    <property type="term" value="F:toxic substance binding"/>
    <property type="evidence" value="ECO:0007669"/>
    <property type="project" value="InterPro"/>
</dbReference>
<dbReference type="GO" id="GO:1902600">
    <property type="term" value="P:proton transmembrane transport"/>
    <property type="evidence" value="ECO:0007669"/>
    <property type="project" value="InterPro"/>
</dbReference>
<dbReference type="GO" id="GO:0051595">
    <property type="term" value="P:response to methylglyoxal"/>
    <property type="evidence" value="ECO:0007669"/>
    <property type="project" value="InterPro"/>
</dbReference>
<dbReference type="FunFam" id="1.20.1530.20:FF:000001">
    <property type="entry name" value="Glutathione-regulated potassium-efflux system protein KefB"/>
    <property type="match status" value="1"/>
</dbReference>
<dbReference type="FunFam" id="3.40.50.720:FF:000036">
    <property type="entry name" value="Glutathione-regulated potassium-efflux system protein KefB"/>
    <property type="match status" value="1"/>
</dbReference>
<dbReference type="Gene3D" id="1.20.1530.20">
    <property type="match status" value="1"/>
</dbReference>
<dbReference type="Gene3D" id="3.40.50.720">
    <property type="entry name" value="NAD(P)-binding Rossmann-like Domain"/>
    <property type="match status" value="1"/>
</dbReference>
<dbReference type="HAMAP" id="MF_01413">
    <property type="entry name" value="K_H_efflux_KefC"/>
    <property type="match status" value="1"/>
</dbReference>
<dbReference type="InterPro" id="IPR006153">
    <property type="entry name" value="Cation/H_exchanger_TM"/>
</dbReference>
<dbReference type="InterPro" id="IPR004771">
    <property type="entry name" value="K/H_exchanger"/>
</dbReference>
<dbReference type="InterPro" id="IPR023941">
    <property type="entry name" value="K_H_efflux_KefC"/>
</dbReference>
<dbReference type="InterPro" id="IPR006036">
    <property type="entry name" value="K_uptake_TrkA"/>
</dbReference>
<dbReference type="InterPro" id="IPR038770">
    <property type="entry name" value="Na+/solute_symporter_sf"/>
</dbReference>
<dbReference type="InterPro" id="IPR036291">
    <property type="entry name" value="NAD(P)-bd_dom_sf"/>
</dbReference>
<dbReference type="InterPro" id="IPR003148">
    <property type="entry name" value="RCK_N"/>
</dbReference>
<dbReference type="NCBIfam" id="TIGR00932">
    <property type="entry name" value="2a37"/>
    <property type="match status" value="1"/>
</dbReference>
<dbReference type="NCBIfam" id="NF002924">
    <property type="entry name" value="PRK03562.1"/>
    <property type="match status" value="1"/>
</dbReference>
<dbReference type="PANTHER" id="PTHR46157:SF3">
    <property type="entry name" value="GLUTATHIONE-REGULATED POTASSIUM-EFFLUX SYSTEM PROTEIN KEFC"/>
    <property type="match status" value="1"/>
</dbReference>
<dbReference type="PANTHER" id="PTHR46157">
    <property type="entry name" value="K(+) EFFLUX ANTIPORTER 3, CHLOROPLASTIC"/>
    <property type="match status" value="1"/>
</dbReference>
<dbReference type="Pfam" id="PF00999">
    <property type="entry name" value="Na_H_Exchanger"/>
    <property type="match status" value="1"/>
</dbReference>
<dbReference type="Pfam" id="PF02254">
    <property type="entry name" value="TrkA_N"/>
    <property type="match status" value="1"/>
</dbReference>
<dbReference type="PRINTS" id="PR00335">
    <property type="entry name" value="KUPTAKETRKA"/>
</dbReference>
<dbReference type="SUPFAM" id="SSF51735">
    <property type="entry name" value="NAD(P)-binding Rossmann-fold domains"/>
    <property type="match status" value="1"/>
</dbReference>
<dbReference type="PROSITE" id="PS51201">
    <property type="entry name" value="RCK_N"/>
    <property type="match status" value="1"/>
</dbReference>
<sequence length="620" mass="67068">MDSHTLLQALIYLGSAALIVPIAVRLGLGSVLGYLIAGCIIGPWGLRLVTDAESILHFAEIGVVLMLFVIGLELDPQRLWKLRASVFGGGALQMVVCGGLIGLFCMFLGLRWQVAELIGMTLALSSTAIAMQAMNERNLTVSQVGRSAFAVLLFQDIAAIPLVAMIPLLAASGASTTLGAFALSALKVAGALALVVLLGRYVTRPALRFVARSGLREVFSAVALFLVFGFGLLLEEVGLSMAMGAFLAGVLLASSEYRHALESDIEPFKGLLLGLFFIGVGMSIDFGTLVENPLRILLLLAGFLAIKIVMLWLVARPLGVPAKQRRWFAVLLGQGSEFAFVVFGAAQMADVLEPEWAKALTLAVALSMAATPIFLVLLTRMEKTATGEAREADEIDEEQPRVIVAGFGRFGQIAGRLLLSSGVKMVVLDHDPDHIETLRKFGMKVFYGDATRMDLLESAGAAKAEVLINAIDDPQTNLQLSELVKSHFPHLQIIARARDVDHYIRLRQAGVAMPERETFEGALKSGRQALEALGLGRYEARERADLFRHFNTRMVEEMAKGENDPLSRAAAYKRTSAMLSEIITEDREHLSLIQRHGWQGTAEGKHSGEAADEPEVKPSI</sequence>
<accession>B5FI29</accession>
<organism>
    <name type="scientific">Salmonella dublin (strain CT_02021853)</name>
    <dbReference type="NCBI Taxonomy" id="439851"/>
    <lineage>
        <taxon>Bacteria</taxon>
        <taxon>Pseudomonadati</taxon>
        <taxon>Pseudomonadota</taxon>
        <taxon>Gammaproteobacteria</taxon>
        <taxon>Enterobacterales</taxon>
        <taxon>Enterobacteriaceae</taxon>
        <taxon>Salmonella</taxon>
    </lineage>
</organism>
<evidence type="ECO:0000255" key="1">
    <source>
        <dbReference type="HAMAP-Rule" id="MF_01413"/>
    </source>
</evidence>
<evidence type="ECO:0000255" key="2">
    <source>
        <dbReference type="PROSITE-ProRule" id="PRU00543"/>
    </source>
</evidence>
<evidence type="ECO:0000256" key="3">
    <source>
        <dbReference type="SAM" id="MobiDB-lite"/>
    </source>
</evidence>